<gene>
    <name evidence="10" type="primary">ORF-A</name>
</gene>
<comment type="function">
    <text evidence="1 7">Poliketide synthase-like protein; part of the polyunsaturated fatty acid synthase composed of the 3 PKS-like subunits A, B and C (PubMed:27527703). While the saturated fatty acids (SFAs) in Thraustochytrium are produced by the conventional fatty acid synthase (FAS) pathway, polyunsaturated fatty acids (PUFAs) including docosahexeanoic acid (DHA) and docosapentaenoic acid (DPA) are synthesized via an anaerobical PKS pathway (PubMed:27527703). PUFA synthase assimilates fatty acyl-CoA, the product of FAS, as the starter unit to synthesize DPA, and this starter unit may be butyryl-CoA, hexanoyl-CoA, or octanoyl-CoA (By similarity). DPA and DHA biosynthesis seem to differ by the reduction at the N-3 position by PUFA synthase, not the extension of carbon chain (By similarity). In DHA biosynthesis, PUFA synthase extends the fatty acyl chain from the methyl toward the carboxyl end, and the double bond is formed when the carbon chain is growing, instead of afterward (By similarity). Therefore, PUFA synthase is unable to transform DPA to DHA, suggesting that DPA is not the precursor of DHA (By similarity). Moreover, DPA molecule is partly extended by FAS KS domain, so DPA biosynthesis is less dependent on PUFA synthase KS domain than DHA (By similarity).</text>
</comment>
<comment type="cofactor">
    <cofactor evidence="3">
        <name>pantetheine 4'-phosphate</name>
        <dbReference type="ChEBI" id="CHEBI:47942"/>
    </cofactor>
</comment>
<comment type="pathway">
    <text evidence="7">Lipid metabolism; fatty acid biosynthesis.</text>
</comment>
<comment type="subunit">
    <text evidence="7">Component of the polyunsaturated fatty acid synthase complex composed of at least ORF-A, ORF-B and ORF-C.</text>
</comment>
<comment type="domain">
    <text evidence="11">Multidomain protein; including a ketosynthase (KS) domain that catalyzes repeated decarboxylative condensation to elongate the fatty acid chain; a malonyl-CoA:ACP transacylase (MAT) domain that selects and transfers the extender unit malonyl-CoA; unusual 9 tandem acyl-carrier protein (ACP) domains that serve as the tether of the growing and completed fatty acid chains via their phosphopantetheinyl arm, and a ketoreductase (KR) domain that catalyzes beta-ketoreduction steps.</text>
</comment>
<comment type="biotechnology">
    <text evidence="8 9">Polyunsaturated fatty acids may be beneficial in prevention of cardiovascular disease and treatment of mild Alzheimer's disease.</text>
</comment>
<comment type="miscellaneous">
    <text evidence="11">The homology between the prokaryotic Shewanella and eukaryotic Labyrinthulomycetes genes suggests that the polyunsaturated fatty acid synthase subunits have undergone lateral gene transfer.</text>
</comment>
<sequence>MAARAQNNGEMDTRIAVIGMSAILPCGTTVRESWETIRAGIDCLSDLPEDRVDVTAYFDPVKTTKDKIYCKRGGFIPEYDFDAREFGLNMFQMEDSDANQTISLLKVKEALQDAGIDALSKEKKNIGCVLGIGGGQKSSHEFYSRLNYVVVDKVLRKMGMPEEDIKVAVEKYKANFPEWRLDSFPGFLGNVTAGRCTNTFNLDGMNCVVDAACASSLIAVKVAIDELLHGDCDMMVTGATCTDNSIGMYMAFSKTPVFSTDPSVRAYDEKTKGMLIGEGSAMLVLKRYADAVRDGDDIHAVIRGCASSSDGKAAGIYTPTISGQEEALRRAYNRACVDPATVTLVEGHGTGTPVGDRIELTALRNLFDKAYGEGNHEKVAVGSIKSTIGHLKAVAGLAGMIKVIMALKHKTLPGTINVDNPPALYDGTPINESSLYINTMNRPWFPPPGVPRRAGISSFGFGGANYHAVLEEAEPEHASAYRLNKRPQPVLMLANSAQELASLCRAQLAAFEAALEEDKAVKNVAYIKCVEFCEEFKFPGSVPAGSARLGFLVKDAEDATATLRAICAQFAKDVAKEAWRLPREGVSFRAKGIATEGAVAALFSGQGAQYTHMFSEVAMNWPQFRQSISAMDAAQCKVAGEDKDFERVSQVLYPRKPYEREQEQDHKKISLTAYSQPSTLACALGAFEIFKDSGFTPDFAAGHSLGEFAALYAAGCVDRDELYELVCRRARIMGGKDAPATPKGCMAAVIGPDAEKIQIRSPNVWLGNSNSPSQTVITGSVEGIQAETAILQKEGFRVVPLACESAFHSPQMENASAAFKDVISKTSFRAPKAETKLFSNVSGETYPRDARDMLTQHMTSSVKFLTQVRNMHQAGARIFVEFGPKQVLSKLVSETLKDDPSIVTVSVNPASGKDSDIQLRDAAVQLVVAGVNLQGFDKWDAPDATRMKAIKKKRTTLRLSAATYVSDKTKKVREAAMNDGRCISYIKNGAAAPAPAPVVDEEAKREAARLQKQLEDAQRQLDEAKRAADEANQKLAAAKEEAKSAAASSKTSAVDTAVVEKHRAILKSMLAELDGYGSVDASALQQQPAAAAPAPAAAAPAPAAPAPAAAVDSALLARAESVVMEVLATKTGYETDMIEADMELETELGIDSIKRVEILSEVQAQLNVEAKDVDALSRTRTVGEVVDAMKAEIAGSAAPAPAAAAPAAAAPAPAAAAAPAAPAAGVDSALLERAETVVMEVLAAKTGYETDMIEADMELETELGIDSIKRVEILSEVQAQLNVEAKDVDALSRTRTVGEVVNAMKAEISGGSAPAPAAAAPAAAAPAPAAAPAAGVDSALLAKAETVVMEVLAAKTGYETDMIEADMELETELGIDSIKRVEILSEVQAQLNVEAKDVDALSRTRTVGEVVNAMKAEISGGSAPAPAAAAPAPAAPAPAAAAPAPAAGVDSALLAKAETVVMEVLAAKTGYETDMIEADMELETELGIDSIKRVEILSEVQAQLNVEAKDVDALSRTRTVGEVVDAMKAEISGGSAPAPAAAAPAPAAPAPAAAAPAPAAGVDSALLAKAETVVMEVLAAKTGYETDMIEADMELETELGIDSIKRVEILSEVQAQLNVEAKDVDALSRTRTVGEVVDAMKAEISGGSAPAPAAAAPAPAAAAPAPAAAAPAAGVDSALLAKAETVVMEVLAAKTGYETDMIESDMELETELGIDSIKRVEILSEVQAQLNVEAKDVDALSRTRTVGEVVDAMKAEISGGSAPAAAAPAPAAAAPAPAAAAPAAGVDSALLAKAETVVMEVLAAKTGYETDMIESDMELETELGIDSIKRVEILSEVQAQLNVEAKDVDALSRTRTVGEVVDAMKAEISGGSAPAAAAPAPAAAAPAPAAAAPAAGVDSALLAKAETVVMEVLAAKTGYETDMIEADMELETELGIDSIKRVEILSEVQAQLNVEAKDVDALSRTRTVGEVVDAMKAEISGGSASASAPAPAATAAAVKIDSVHGADCDDLSLMHAKVVDIRRPDELLLERPENRPVLVVDDGSELTLALVRVLGACAVVLTFDGLQLAQRAGAAAIRHVLAKDLSAESAEKAVQEAEQRFGKLGGLISQQADRFEPASILGFTLMLAKFAKASLCTSVPGGRPAFIGVARLDGRLGFTSQDGADALTRAQRGAIFGLCKTIGLEWSDSDVFSRGVDVAQNMHPEDAAVAIVREMACADIRVREVGIGANQQRCTIRAVKLEPGAPQRQISKDDVLVVSGGARGITPLCIREITRQISGGKYILLGRSKVSSSEPTWCAGISDDKAVQKAATQELKRAFAAGEGPKPTPRAITKLVGSVLGAREVRSSVAAIEALGGKAIYSSCDVNSAADVAKAVREAEAQLGGRVSGIVHASGVLRDRLIEKKLPDEFDAVYGTKVAGLENLLNTVDRANLKHMVLFSSLAGFHGNVGQSDYAMANEALNKIGLELSNSGVSVKSICFGPWDGGMVTPQLKKQFQEMGVQIIPREGGADTVARIVLGSSPAEILVGNWRTPTKKIGTETITLHRKISAKSNAFLDDHVIQGRRVLPMTLAIGSLAETCLGLFPGYSLWAIDDAQLFKGVTVDGDVNCEIALTPSEGQAGRVNVQATLKTFSSGKLVPAYRAVVVLSSQGAPPANATMQPPSLSADPAAQSAVYDGKTLFHGPAFRGIDEVLSCSKSQLVAKCRAVPGSDAARAEFATDTDAHDPFVNDLAFQAMLVWVRRTLGQAALPNSIQRIVQHRPVPQDKPFYITLRSNQAGGHSQHKHALQFHNEQGDLFIDVQASVIATDSLAF</sequence>
<dbReference type="EC" id="2.3.1.-" evidence="7"/>
<dbReference type="EMBL" id="KX651612">
    <property type="protein sequence ID" value="AOG21004.1"/>
    <property type="molecule type" value="Genomic_DNA"/>
</dbReference>
<dbReference type="SMR" id="A0A1B3PEI6"/>
<dbReference type="UniPathway" id="UPA00094"/>
<dbReference type="GO" id="GO:0004315">
    <property type="term" value="F:3-oxoacyl-[acyl-carrier-protein] synthase activity"/>
    <property type="evidence" value="ECO:0007669"/>
    <property type="project" value="InterPro"/>
</dbReference>
<dbReference type="GO" id="GO:0006633">
    <property type="term" value="P:fatty acid biosynthetic process"/>
    <property type="evidence" value="ECO:0007669"/>
    <property type="project" value="UniProtKB-UniPathway"/>
</dbReference>
<dbReference type="CDD" id="cd00833">
    <property type="entry name" value="PKS"/>
    <property type="match status" value="1"/>
</dbReference>
<dbReference type="Gene3D" id="3.40.47.10">
    <property type="match status" value="1"/>
</dbReference>
<dbReference type="Gene3D" id="1.10.1200.10">
    <property type="entry name" value="ACP-like"/>
    <property type="match status" value="8"/>
</dbReference>
<dbReference type="Gene3D" id="3.30.70.250">
    <property type="entry name" value="Malonyl-CoA ACP transacylase, ACP-binding"/>
    <property type="match status" value="1"/>
</dbReference>
<dbReference type="Gene3D" id="3.40.366.10">
    <property type="entry name" value="Malonyl-Coenzyme A Acyl Carrier Protein, domain 2"/>
    <property type="match status" value="1"/>
</dbReference>
<dbReference type="Gene3D" id="3.40.50.720">
    <property type="entry name" value="NAD(P)-binding Rossmann-like Domain"/>
    <property type="match status" value="1"/>
</dbReference>
<dbReference type="Gene3D" id="3.10.129.110">
    <property type="entry name" value="Polyketide synthase dehydratase"/>
    <property type="match status" value="1"/>
</dbReference>
<dbReference type="InterPro" id="IPR001227">
    <property type="entry name" value="Ac_transferase_dom_sf"/>
</dbReference>
<dbReference type="InterPro" id="IPR036736">
    <property type="entry name" value="ACP-like_sf"/>
</dbReference>
<dbReference type="InterPro" id="IPR014043">
    <property type="entry name" value="Acyl_transferase_dom"/>
</dbReference>
<dbReference type="InterPro" id="IPR016035">
    <property type="entry name" value="Acyl_Trfase/lysoPLipase"/>
</dbReference>
<dbReference type="InterPro" id="IPR018201">
    <property type="entry name" value="Ketoacyl_synth_AS"/>
</dbReference>
<dbReference type="InterPro" id="IPR014031">
    <property type="entry name" value="Ketoacyl_synth_C"/>
</dbReference>
<dbReference type="InterPro" id="IPR014030">
    <property type="entry name" value="Ketoacyl_synth_N"/>
</dbReference>
<dbReference type="InterPro" id="IPR016036">
    <property type="entry name" value="Malonyl_transacylase_ACP-bd"/>
</dbReference>
<dbReference type="InterPro" id="IPR036291">
    <property type="entry name" value="NAD(P)-bd_dom_sf"/>
</dbReference>
<dbReference type="InterPro" id="IPR052568">
    <property type="entry name" value="PKS-FAS_Synthase"/>
</dbReference>
<dbReference type="InterPro" id="IPR032821">
    <property type="entry name" value="PKS_assoc"/>
</dbReference>
<dbReference type="InterPro" id="IPR020841">
    <property type="entry name" value="PKS_Beta-ketoAc_synthase_dom"/>
</dbReference>
<dbReference type="InterPro" id="IPR042104">
    <property type="entry name" value="PKS_dehydratase_sf"/>
</dbReference>
<dbReference type="InterPro" id="IPR013968">
    <property type="entry name" value="PKS_KR"/>
</dbReference>
<dbReference type="InterPro" id="IPR049900">
    <property type="entry name" value="PKS_mFAS_DH"/>
</dbReference>
<dbReference type="InterPro" id="IPR009081">
    <property type="entry name" value="PP-bd_ACP"/>
</dbReference>
<dbReference type="InterPro" id="IPR016039">
    <property type="entry name" value="Thiolase-like"/>
</dbReference>
<dbReference type="PANTHER" id="PTHR43074:SF1">
    <property type="entry name" value="BETA-KETOACYL SYNTHASE FAMILY PROTEIN-RELATED"/>
    <property type="match status" value="1"/>
</dbReference>
<dbReference type="PANTHER" id="PTHR43074">
    <property type="entry name" value="OMEGA-3 POLYUNSATURATED FATTY ACID SYNTHASE PFAB-RELATED"/>
    <property type="match status" value="1"/>
</dbReference>
<dbReference type="Pfam" id="PF00698">
    <property type="entry name" value="Acyl_transf_1"/>
    <property type="match status" value="1"/>
</dbReference>
<dbReference type="Pfam" id="PF16197">
    <property type="entry name" value="KAsynt_C_assoc"/>
    <property type="match status" value="1"/>
</dbReference>
<dbReference type="Pfam" id="PF00109">
    <property type="entry name" value="ketoacyl-synt"/>
    <property type="match status" value="1"/>
</dbReference>
<dbReference type="Pfam" id="PF02801">
    <property type="entry name" value="Ketoacyl-synt_C"/>
    <property type="match status" value="1"/>
</dbReference>
<dbReference type="Pfam" id="PF08659">
    <property type="entry name" value="KR"/>
    <property type="match status" value="1"/>
</dbReference>
<dbReference type="Pfam" id="PF00550">
    <property type="entry name" value="PP-binding"/>
    <property type="match status" value="8"/>
</dbReference>
<dbReference type="SMART" id="SM00827">
    <property type="entry name" value="PKS_AT"/>
    <property type="match status" value="1"/>
</dbReference>
<dbReference type="SMART" id="SM00822">
    <property type="entry name" value="PKS_KR"/>
    <property type="match status" value="1"/>
</dbReference>
<dbReference type="SMART" id="SM00825">
    <property type="entry name" value="PKS_KS"/>
    <property type="match status" value="1"/>
</dbReference>
<dbReference type="SUPFAM" id="SSF47336">
    <property type="entry name" value="ACP-like"/>
    <property type="match status" value="8"/>
</dbReference>
<dbReference type="SUPFAM" id="SSF52151">
    <property type="entry name" value="FabD/lysophospholipase-like"/>
    <property type="match status" value="1"/>
</dbReference>
<dbReference type="SUPFAM" id="SSF51735">
    <property type="entry name" value="NAD(P)-binding Rossmann-fold domains"/>
    <property type="match status" value="1"/>
</dbReference>
<dbReference type="SUPFAM" id="SSF55048">
    <property type="entry name" value="Probable ACP-binding domain of malonyl-CoA ACP transacylase"/>
    <property type="match status" value="1"/>
</dbReference>
<dbReference type="SUPFAM" id="SSF53901">
    <property type="entry name" value="Thiolase-like"/>
    <property type="match status" value="1"/>
</dbReference>
<dbReference type="PROSITE" id="PS50075">
    <property type="entry name" value="CARRIER"/>
    <property type="match status" value="8"/>
</dbReference>
<dbReference type="PROSITE" id="PS00606">
    <property type="entry name" value="KS3_1"/>
    <property type="match status" value="1"/>
</dbReference>
<dbReference type="PROSITE" id="PS52004">
    <property type="entry name" value="KS3_2"/>
    <property type="match status" value="1"/>
</dbReference>
<dbReference type="PROSITE" id="PS52019">
    <property type="entry name" value="PKS_MFAS_DH"/>
    <property type="match status" value="1"/>
</dbReference>
<feature type="chain" id="PRO_0000456888" description="Polyunsaturated fatty acid synthase subunit A">
    <location>
        <begin position="1"/>
        <end position="2812"/>
    </location>
</feature>
<feature type="domain" description="Ketosynthase family 3 (KS3)" evidence="4">
    <location>
        <begin position="12"/>
        <end position="472"/>
    </location>
</feature>
<feature type="domain" description="Malonyl-CoA:ACP transacylase (MAT)" evidence="2 11">
    <location>
        <begin position="602"/>
        <end position="913"/>
    </location>
</feature>
<feature type="domain" description="Carrier 1" evidence="3">
    <location>
        <begin position="1114"/>
        <end position="1193"/>
    </location>
</feature>
<feature type="domain" description="Carrier 2" evidence="3">
    <location>
        <begin position="1232"/>
        <end position="1308"/>
    </location>
</feature>
<feature type="domain" description="Carrier 3" evidence="3">
    <location>
        <begin position="1342"/>
        <end position="1418"/>
    </location>
</feature>
<feature type="domain" description="Carrier 4" evidence="3">
    <location>
        <begin position="1455"/>
        <end position="1531"/>
    </location>
</feature>
<feature type="domain" description="Carrier 5" evidence="3">
    <location>
        <begin position="1568"/>
        <end position="1644"/>
    </location>
</feature>
<feature type="domain" description="Carrier 6" evidence="3">
    <location>
        <begin position="1681"/>
        <end position="1757"/>
    </location>
</feature>
<feature type="domain" description="Carrier 7" evidence="3">
    <location>
        <begin position="1792"/>
        <end position="1868"/>
    </location>
</feature>
<feature type="domain" description="Carrier 8" evidence="3">
    <location>
        <begin position="1903"/>
        <end position="1979"/>
    </location>
</feature>
<feature type="domain" description="Ketoreductase (KR)" evidence="2 11">
    <location>
        <begin position="2257"/>
        <end position="2484"/>
    </location>
</feature>
<feature type="domain" description="PKS/mFAS DH" evidence="5">
    <location>
        <begin position="2524"/>
        <end position="2812"/>
    </location>
</feature>
<feature type="region of interest" description="Disordered" evidence="6">
    <location>
        <begin position="1422"/>
        <end position="1442"/>
    </location>
</feature>
<feature type="region of interest" description="Disordered" evidence="6">
    <location>
        <begin position="1535"/>
        <end position="1555"/>
    </location>
</feature>
<feature type="region of interest" description="N-terminal hotdog fold" evidence="5">
    <location>
        <begin position="2524"/>
        <end position="2651"/>
    </location>
</feature>
<feature type="region of interest" description="Dehydratase (DH) domain" evidence="2 11">
    <location>
        <begin position="2540"/>
        <end position="2800"/>
    </location>
</feature>
<feature type="region of interest" description="C-terminal hotdog fold" evidence="5">
    <location>
        <begin position="2666"/>
        <end position="2812"/>
    </location>
</feature>
<feature type="coiled-coil region" evidence="2">
    <location>
        <begin position="1000"/>
        <end position="1048"/>
    </location>
</feature>
<feature type="compositionally biased region" description="Low complexity" evidence="6">
    <location>
        <begin position="1423"/>
        <end position="1442"/>
    </location>
</feature>
<feature type="compositionally biased region" description="Low complexity" evidence="6">
    <location>
        <begin position="1536"/>
        <end position="1555"/>
    </location>
</feature>
<feature type="active site" description="For beta-ketoacyl synthase activity" evidence="4">
    <location>
        <position position="213"/>
    </location>
</feature>
<feature type="active site" description="For beta-ketoacyl synthase activity" evidence="4">
    <location>
        <position position="348"/>
    </location>
</feature>
<feature type="active site" description="For beta-ketoacyl synthase activity" evidence="4">
    <location>
        <position position="390"/>
    </location>
</feature>
<feature type="active site" description="Proton acceptor; for dehydratase activity" evidence="5">
    <location>
        <position position="2559"/>
    </location>
</feature>
<feature type="active site" description="Proton donor; for dehydratase activity" evidence="5">
    <location>
        <position position="2730"/>
    </location>
</feature>
<feature type="modified residue" description="O-(pantetheine 4'-phosphoryl)serine" evidence="3">
    <location>
        <position position="1152"/>
    </location>
</feature>
<feature type="modified residue" description="O-(pantetheine 4'-phosphoryl)serine" evidence="3">
    <location>
        <position position="1267"/>
    </location>
</feature>
<feature type="modified residue" description="O-(pantetheine 4'-phosphoryl)serine" evidence="3">
    <location>
        <position position="1377"/>
    </location>
</feature>
<feature type="modified residue" description="O-(pantetheine 4'-phosphoryl)serine" evidence="3">
    <location>
        <position position="1490"/>
    </location>
</feature>
<feature type="modified residue" description="O-(pantetheine 4'-phosphoryl)serine" evidence="3">
    <location>
        <position position="1603"/>
    </location>
</feature>
<feature type="modified residue" description="O-(pantetheine 4'-phosphoryl)serine" evidence="3">
    <location>
        <position position="1716"/>
    </location>
</feature>
<feature type="modified residue" description="O-(pantetheine 4'-phosphoryl)serine" evidence="3">
    <location>
        <position position="1827"/>
    </location>
</feature>
<feature type="modified residue" description="O-(pantetheine 4'-phosphoryl)serine" evidence="3">
    <location>
        <position position="1938"/>
    </location>
</feature>
<proteinExistence type="evidence at protein level"/>
<accession>A0A1B3PEI6</accession>
<name>PFA1_THRS2</name>
<keyword id="KW-0175">Coiled coil</keyword>
<keyword id="KW-0275">Fatty acid biosynthesis</keyword>
<keyword id="KW-0276">Fatty acid metabolism</keyword>
<keyword id="KW-0444">Lipid biosynthesis</keyword>
<keyword id="KW-0443">Lipid metabolism</keyword>
<keyword id="KW-0596">Phosphopantetheine</keyword>
<keyword id="KW-0597">Phosphoprotein</keyword>
<keyword id="KW-0677">Repeat</keyword>
<keyword id="KW-0808">Transferase</keyword>
<organism>
    <name type="scientific">Thraustochytrium sp. (strain ATCC 26185 / S-3)</name>
    <dbReference type="NCBI Taxonomy" id="672127"/>
    <lineage>
        <taxon>Eukaryota</taxon>
        <taxon>Sar</taxon>
        <taxon>Stramenopiles</taxon>
        <taxon>Bigyra</taxon>
        <taxon>Labyrinthulomycetes</taxon>
        <taxon>Thraustochytrida</taxon>
        <taxon>Thraustochytriaceae</taxon>
        <taxon>Thraustochytrium</taxon>
    </lineage>
</organism>
<evidence type="ECO:0000250" key="1">
    <source>
        <dbReference type="UniProtKB" id="Q94FB8"/>
    </source>
</evidence>
<evidence type="ECO:0000255" key="2"/>
<evidence type="ECO:0000255" key="3">
    <source>
        <dbReference type="PROSITE-ProRule" id="PRU00258"/>
    </source>
</evidence>
<evidence type="ECO:0000255" key="4">
    <source>
        <dbReference type="PROSITE-ProRule" id="PRU01348"/>
    </source>
</evidence>
<evidence type="ECO:0000255" key="5">
    <source>
        <dbReference type="PROSITE-ProRule" id="PRU01363"/>
    </source>
</evidence>
<evidence type="ECO:0000256" key="6">
    <source>
        <dbReference type="SAM" id="MobiDB-lite"/>
    </source>
</evidence>
<evidence type="ECO:0000269" key="7">
    <source>
    </source>
</evidence>
<evidence type="ECO:0000269" key="8">
    <source>
    </source>
</evidence>
<evidence type="ECO:0000269" key="9">
    <source>
    </source>
</evidence>
<evidence type="ECO:0000303" key="10">
    <source>
    </source>
</evidence>
<evidence type="ECO:0000305" key="11">
    <source>
    </source>
</evidence>
<protein>
    <recommendedName>
        <fullName evidence="10">Polyunsaturated fatty acid synthase subunit A</fullName>
        <shortName evidence="10">PUFAs-A</shortName>
        <ecNumber evidence="7">2.3.1.-</ecNumber>
    </recommendedName>
</protein>
<reference key="1">
    <citation type="journal article" date="2016" name="J. Lipid Res.">
        <title>Biosynthetic mechanism of very long chain polyunsaturated fatty acids in Thraustochytrium sp. 26185.</title>
        <authorList>
            <person name="Meesapyodsuk D."/>
            <person name="Qiu X."/>
        </authorList>
    </citation>
    <scope>NUCLEOTIDE SEQUENCE [GENOMIC DNA]</scope>
    <scope>FUNCTION</scope>
    <scope>DOMAIN</scope>
    <scope>SUBUNIT</scope>
    <scope>CATALYTIC ACTIVITY</scope>
    <source>
        <strain>ATCC 26185 / S-3</strain>
    </source>
</reference>
<reference key="2">
    <citation type="journal article" date="2017" name="J. Clin. Lipidol.">
        <title>Use of supplemental long-chain omega-3 fatty acids and risk for cardiac death: An updated meta-analysis and review of research gaps.</title>
        <authorList>
            <person name="Maki K.C."/>
            <person name="Palacios O.M."/>
            <person name="Bell M."/>
            <person name="Toth P.P."/>
        </authorList>
    </citation>
    <scope>BIOTECHNOLOGY</scope>
</reference>
<reference key="3">
    <citation type="journal article" date="2018" name="Nutr. Neurosci.">
        <title>Omega-3 fatty acids' supplementation in Alzheimer's disease: A systematic review.</title>
        <authorList>
            <person name="Canhada S."/>
            <person name="Castro K."/>
            <person name="Perry I.S."/>
            <person name="Luft V.C."/>
        </authorList>
    </citation>
    <scope>BIOTECHNOLOGY</scope>
</reference>